<reference key="1">
    <citation type="journal article" date="2015" name="Microbiology">
        <title>Genome of Methanoregula boonei 6A8 reveals adaptations to oligotrophic peatland environments.</title>
        <authorList>
            <person name="Braeuer S."/>
            <person name="Cadillo-Quiroz H."/>
            <person name="Kyrpides N."/>
            <person name="Woyke T."/>
            <person name="Goodwin L."/>
            <person name="Detter C."/>
            <person name="Podell S."/>
            <person name="Yavitt J.B."/>
            <person name="Zinder S.H."/>
        </authorList>
    </citation>
    <scope>NUCLEOTIDE SEQUENCE [LARGE SCALE GENOMIC DNA]</scope>
    <source>
        <strain>DSM 21154 / JCM 14090 / 6A8</strain>
    </source>
</reference>
<organism>
    <name type="scientific">Methanoregula boonei (strain DSM 21154 / JCM 14090 / 6A8)</name>
    <dbReference type="NCBI Taxonomy" id="456442"/>
    <lineage>
        <taxon>Archaea</taxon>
        <taxon>Methanobacteriati</taxon>
        <taxon>Methanobacteriota</taxon>
        <taxon>Stenosarchaea group</taxon>
        <taxon>Methanomicrobia</taxon>
        <taxon>Methanomicrobiales</taxon>
        <taxon>Methanoregulaceae</taxon>
        <taxon>Methanoregula</taxon>
    </lineage>
</organism>
<protein>
    <recommendedName>
        <fullName evidence="1">Small ribosomal subunit protein uS17</fullName>
    </recommendedName>
    <alternativeName>
        <fullName evidence="2">30S ribosomal protein S17</fullName>
    </alternativeName>
</protein>
<feature type="chain" id="PRO_1000054979" description="Small ribosomal subunit protein uS17">
    <location>
        <begin position="1"/>
        <end position="108"/>
    </location>
</feature>
<dbReference type="EMBL" id="CP000780">
    <property type="protein sequence ID" value="ABS55059.1"/>
    <property type="molecule type" value="Genomic_DNA"/>
</dbReference>
<dbReference type="RefSeq" id="WP_012106080.1">
    <property type="nucleotide sequence ID" value="NC_009712.1"/>
</dbReference>
<dbReference type="SMR" id="A7I5P8"/>
<dbReference type="STRING" id="456442.Mboo_0541"/>
<dbReference type="GeneID" id="5412235"/>
<dbReference type="KEGG" id="mbn:Mboo_0541"/>
<dbReference type="eggNOG" id="arCOG04096">
    <property type="taxonomic scope" value="Archaea"/>
</dbReference>
<dbReference type="HOGENOM" id="CLU_073626_0_3_2"/>
<dbReference type="OrthoDB" id="10698at2157"/>
<dbReference type="Proteomes" id="UP000002408">
    <property type="component" value="Chromosome"/>
</dbReference>
<dbReference type="GO" id="GO:0022627">
    <property type="term" value="C:cytosolic small ribosomal subunit"/>
    <property type="evidence" value="ECO:0007669"/>
    <property type="project" value="TreeGrafter"/>
</dbReference>
<dbReference type="GO" id="GO:0019843">
    <property type="term" value="F:rRNA binding"/>
    <property type="evidence" value="ECO:0007669"/>
    <property type="project" value="UniProtKB-UniRule"/>
</dbReference>
<dbReference type="GO" id="GO:0003735">
    <property type="term" value="F:structural constituent of ribosome"/>
    <property type="evidence" value="ECO:0007669"/>
    <property type="project" value="InterPro"/>
</dbReference>
<dbReference type="GO" id="GO:0006412">
    <property type="term" value="P:translation"/>
    <property type="evidence" value="ECO:0007669"/>
    <property type="project" value="UniProtKB-UniRule"/>
</dbReference>
<dbReference type="CDD" id="cd00364">
    <property type="entry name" value="Ribosomal_uS17"/>
    <property type="match status" value="1"/>
</dbReference>
<dbReference type="FunFam" id="2.40.50.1000:FF:000005">
    <property type="entry name" value="30S ribosomal protein S17"/>
    <property type="match status" value="1"/>
</dbReference>
<dbReference type="Gene3D" id="2.40.50.1000">
    <property type="match status" value="1"/>
</dbReference>
<dbReference type="HAMAP" id="MF_01345_A">
    <property type="entry name" value="Ribosomal_uS17_A"/>
    <property type="match status" value="1"/>
</dbReference>
<dbReference type="InterPro" id="IPR012340">
    <property type="entry name" value="NA-bd_OB-fold"/>
</dbReference>
<dbReference type="InterPro" id="IPR000266">
    <property type="entry name" value="Ribosomal_uS17"/>
</dbReference>
<dbReference type="InterPro" id="IPR028333">
    <property type="entry name" value="Ribosomal_uS17_arc/euk"/>
</dbReference>
<dbReference type="InterPro" id="IPR019978">
    <property type="entry name" value="Ribosomal_uS17_archaeal"/>
</dbReference>
<dbReference type="InterPro" id="IPR019979">
    <property type="entry name" value="Ribosomal_uS17_CS"/>
</dbReference>
<dbReference type="NCBIfam" id="NF006345">
    <property type="entry name" value="PRK08572.1"/>
    <property type="match status" value="1"/>
</dbReference>
<dbReference type="NCBIfam" id="TIGR03630">
    <property type="entry name" value="uS17_arch"/>
    <property type="match status" value="1"/>
</dbReference>
<dbReference type="PANTHER" id="PTHR10744">
    <property type="entry name" value="40S RIBOSOMAL PROTEIN S11 FAMILY MEMBER"/>
    <property type="match status" value="1"/>
</dbReference>
<dbReference type="PANTHER" id="PTHR10744:SF9">
    <property type="entry name" value="40S RIBOSOMAL PROTEIN S11-RELATED"/>
    <property type="match status" value="1"/>
</dbReference>
<dbReference type="Pfam" id="PF00366">
    <property type="entry name" value="Ribosomal_S17"/>
    <property type="match status" value="1"/>
</dbReference>
<dbReference type="PRINTS" id="PR00973">
    <property type="entry name" value="RIBOSOMALS17"/>
</dbReference>
<dbReference type="SUPFAM" id="SSF50249">
    <property type="entry name" value="Nucleic acid-binding proteins"/>
    <property type="match status" value="1"/>
</dbReference>
<dbReference type="PROSITE" id="PS00056">
    <property type="entry name" value="RIBOSOMAL_S17"/>
    <property type="match status" value="1"/>
</dbReference>
<proteinExistence type="inferred from homology"/>
<comment type="function">
    <text evidence="1">One of the primary rRNA binding proteins, it binds specifically to the 5'-end of 16S ribosomal RNA.</text>
</comment>
<comment type="subunit">
    <text evidence="1">Part of the 30S ribosomal subunit.</text>
</comment>
<comment type="similarity">
    <text evidence="1">Belongs to the universal ribosomal protein uS17 family.</text>
</comment>
<gene>
    <name evidence="1" type="primary">rps17</name>
    <name type="ordered locus">Mboo_0541</name>
</gene>
<name>RS17_METB6</name>
<accession>A7I5P8</accession>
<evidence type="ECO:0000255" key="1">
    <source>
        <dbReference type="HAMAP-Rule" id="MF_01345"/>
    </source>
</evidence>
<evidence type="ECO:0000305" key="2"/>
<keyword id="KW-1185">Reference proteome</keyword>
<keyword id="KW-0687">Ribonucleoprotein</keyword>
<keyword id="KW-0689">Ribosomal protein</keyword>
<keyword id="KW-0694">RNA-binding</keyword>
<keyword id="KW-0699">rRNA-binding</keyword>
<sequence>MAQNIGLNVQPPKQECKDVNCPFHGTLPVRGQVITGKVVSDKMMGTVVVARDYLHYVRKYNRYEKRISKLHAHNPPCIQAKVGDLVKIAECRPLSKSTTYVVVEVQQP</sequence>